<gene>
    <name type="primary">pflA</name>
    <name type="ordered locus">MW0202</name>
</gene>
<keyword id="KW-0004">4Fe-4S</keyword>
<keyword id="KW-0119">Carbohydrate metabolism</keyword>
<keyword id="KW-0963">Cytoplasm</keyword>
<keyword id="KW-0313">Glucose metabolism</keyword>
<keyword id="KW-0408">Iron</keyword>
<keyword id="KW-0411">Iron-sulfur</keyword>
<keyword id="KW-0479">Metal-binding</keyword>
<keyword id="KW-0560">Oxidoreductase</keyword>
<keyword id="KW-0949">S-adenosyl-L-methionine</keyword>
<protein>
    <recommendedName>
        <fullName>Pyruvate formate-lyase-activating enzyme</fullName>
        <shortName>PFL-activating enzyme</shortName>
        <ecNumber>1.97.1.4</ecNumber>
    </recommendedName>
</protein>
<dbReference type="EC" id="1.97.1.4"/>
<dbReference type="EMBL" id="BA000033">
    <property type="protein sequence ID" value="BAB94067.1"/>
    <property type="molecule type" value="Genomic_DNA"/>
</dbReference>
<dbReference type="RefSeq" id="WP_000911657.1">
    <property type="nucleotide sequence ID" value="NC_003923.1"/>
</dbReference>
<dbReference type="SMR" id="Q7A1W8"/>
<dbReference type="KEGG" id="sam:MW0202"/>
<dbReference type="HOGENOM" id="CLU_058969_1_1_9"/>
<dbReference type="GO" id="GO:0005737">
    <property type="term" value="C:cytoplasm"/>
    <property type="evidence" value="ECO:0007669"/>
    <property type="project" value="UniProtKB-SubCell"/>
</dbReference>
<dbReference type="GO" id="GO:0051539">
    <property type="term" value="F:4 iron, 4 sulfur cluster binding"/>
    <property type="evidence" value="ECO:0007669"/>
    <property type="project" value="UniProtKB-KW"/>
</dbReference>
<dbReference type="GO" id="GO:0043365">
    <property type="term" value="F:[formate-C-acetyltransferase]-activating enzyme activity"/>
    <property type="evidence" value="ECO:0007669"/>
    <property type="project" value="UniProtKB-EC"/>
</dbReference>
<dbReference type="GO" id="GO:0046872">
    <property type="term" value="F:metal ion binding"/>
    <property type="evidence" value="ECO:0007669"/>
    <property type="project" value="UniProtKB-KW"/>
</dbReference>
<dbReference type="GO" id="GO:0006006">
    <property type="term" value="P:glucose metabolic process"/>
    <property type="evidence" value="ECO:0007669"/>
    <property type="project" value="UniProtKB-KW"/>
</dbReference>
<dbReference type="CDD" id="cd01335">
    <property type="entry name" value="Radical_SAM"/>
    <property type="match status" value="1"/>
</dbReference>
<dbReference type="Gene3D" id="3.20.20.70">
    <property type="entry name" value="Aldolase class I"/>
    <property type="match status" value="1"/>
</dbReference>
<dbReference type="InterPro" id="IPR013785">
    <property type="entry name" value="Aldolase_TIM"/>
</dbReference>
<dbReference type="InterPro" id="IPR040074">
    <property type="entry name" value="BssD/PflA/YjjW"/>
</dbReference>
<dbReference type="InterPro" id="IPR034457">
    <property type="entry name" value="Organic_radical-activating"/>
</dbReference>
<dbReference type="InterPro" id="IPR012839">
    <property type="entry name" value="Organic_radical_activase"/>
</dbReference>
<dbReference type="InterPro" id="IPR012838">
    <property type="entry name" value="PFL1_activating"/>
</dbReference>
<dbReference type="InterPro" id="IPR034465">
    <property type="entry name" value="Pyruvate_for-lyase_activase"/>
</dbReference>
<dbReference type="InterPro" id="IPR001989">
    <property type="entry name" value="Radical_activat_CS"/>
</dbReference>
<dbReference type="InterPro" id="IPR007197">
    <property type="entry name" value="rSAM"/>
</dbReference>
<dbReference type="NCBIfam" id="TIGR02493">
    <property type="entry name" value="PFLA"/>
    <property type="match status" value="1"/>
</dbReference>
<dbReference type="PANTHER" id="PTHR30352:SF5">
    <property type="entry name" value="PYRUVATE FORMATE-LYASE 1-ACTIVATING ENZYME"/>
    <property type="match status" value="1"/>
</dbReference>
<dbReference type="PANTHER" id="PTHR30352">
    <property type="entry name" value="PYRUVATE FORMATE-LYASE-ACTIVATING ENZYME"/>
    <property type="match status" value="1"/>
</dbReference>
<dbReference type="Pfam" id="PF13353">
    <property type="entry name" value="Fer4_12"/>
    <property type="match status" value="1"/>
</dbReference>
<dbReference type="Pfam" id="PF04055">
    <property type="entry name" value="Radical_SAM"/>
    <property type="match status" value="1"/>
</dbReference>
<dbReference type="PIRSF" id="PIRSF000371">
    <property type="entry name" value="PFL_act_enz"/>
    <property type="match status" value="1"/>
</dbReference>
<dbReference type="SFLD" id="SFLDG01118">
    <property type="entry name" value="activating_enzymes__group_2"/>
    <property type="match status" value="1"/>
</dbReference>
<dbReference type="SFLD" id="SFLDF00278">
    <property type="entry name" value="pyruvate_formate-lyase_activas"/>
    <property type="match status" value="1"/>
</dbReference>
<dbReference type="SUPFAM" id="SSF102114">
    <property type="entry name" value="Radical SAM enzymes"/>
    <property type="match status" value="1"/>
</dbReference>
<dbReference type="PROSITE" id="PS01087">
    <property type="entry name" value="RADICAL_ACTIVATING"/>
    <property type="match status" value="1"/>
</dbReference>
<dbReference type="PROSITE" id="PS51918">
    <property type="entry name" value="RADICAL_SAM"/>
    <property type="match status" value="1"/>
</dbReference>
<reference key="1">
    <citation type="journal article" date="2002" name="Lancet">
        <title>Genome and virulence determinants of high virulence community-acquired MRSA.</title>
        <authorList>
            <person name="Baba T."/>
            <person name="Takeuchi F."/>
            <person name="Kuroda M."/>
            <person name="Yuzawa H."/>
            <person name="Aoki K."/>
            <person name="Oguchi A."/>
            <person name="Nagai Y."/>
            <person name="Iwama N."/>
            <person name="Asano K."/>
            <person name="Naimi T."/>
            <person name="Kuroda H."/>
            <person name="Cui L."/>
            <person name="Yamamoto K."/>
            <person name="Hiramatsu K."/>
        </authorList>
    </citation>
    <scope>NUCLEOTIDE SEQUENCE [LARGE SCALE GENOMIC DNA]</scope>
    <source>
        <strain>MW2</strain>
    </source>
</reference>
<organism>
    <name type="scientific">Staphylococcus aureus (strain MW2)</name>
    <dbReference type="NCBI Taxonomy" id="196620"/>
    <lineage>
        <taxon>Bacteria</taxon>
        <taxon>Bacillati</taxon>
        <taxon>Bacillota</taxon>
        <taxon>Bacilli</taxon>
        <taxon>Bacillales</taxon>
        <taxon>Staphylococcaceae</taxon>
        <taxon>Staphylococcus</taxon>
    </lineage>
</organism>
<name>PFLA_STAAW</name>
<proteinExistence type="inferred from homology"/>
<accession>Q7A1W8</accession>
<feature type="chain" id="PRO_0000271716" description="Pyruvate formate-lyase-activating enzyme">
    <location>
        <begin position="1"/>
        <end position="251"/>
    </location>
</feature>
<feature type="domain" description="Radical SAM core" evidence="3">
    <location>
        <begin position="15"/>
        <end position="244"/>
    </location>
</feature>
<feature type="binding site" evidence="2">
    <location>
        <position position="29"/>
    </location>
    <ligand>
        <name>[4Fe-4S] cluster</name>
        <dbReference type="ChEBI" id="CHEBI:49883"/>
        <note>4Fe-4S-S-AdoMet</note>
    </ligand>
</feature>
<feature type="binding site" evidence="2">
    <location>
        <position position="33"/>
    </location>
    <ligand>
        <name>[4Fe-4S] cluster</name>
        <dbReference type="ChEBI" id="CHEBI:49883"/>
        <note>4Fe-4S-S-AdoMet</note>
    </ligand>
</feature>
<feature type="binding site" evidence="2">
    <location>
        <begin position="35"/>
        <end position="37"/>
    </location>
    <ligand>
        <name>S-adenosyl-L-methionine</name>
        <dbReference type="ChEBI" id="CHEBI:59789"/>
    </ligand>
</feature>
<feature type="binding site" evidence="2">
    <location>
        <position position="36"/>
    </location>
    <ligand>
        <name>[4Fe-4S] cluster</name>
        <dbReference type="ChEBI" id="CHEBI:49883"/>
        <note>4Fe-4S-S-AdoMet</note>
    </ligand>
</feature>
<feature type="binding site" evidence="2">
    <location>
        <position position="79"/>
    </location>
    <ligand>
        <name>S-adenosyl-L-methionine</name>
        <dbReference type="ChEBI" id="CHEBI:59789"/>
    </ligand>
</feature>
<feature type="binding site" evidence="2">
    <location>
        <begin position="134"/>
        <end position="136"/>
    </location>
    <ligand>
        <name>S-adenosyl-L-methionine</name>
        <dbReference type="ChEBI" id="CHEBI:59789"/>
    </ligand>
</feature>
<feature type="binding site" evidence="2">
    <location>
        <position position="207"/>
    </location>
    <ligand>
        <name>S-adenosyl-L-methionine</name>
        <dbReference type="ChEBI" id="CHEBI:59789"/>
    </ligand>
</feature>
<comment type="function">
    <text evidence="1">Activation of pyruvate formate-lyase under anaerobic conditions by generation of an organic free radical, using S-adenosylmethionine and reduced flavodoxin as cosubstrates to produce 5'-deoxy-adenosine.</text>
</comment>
<comment type="catalytic activity">
    <reaction>
        <text>glycyl-[formate C-acetyltransferase] + reduced [flavodoxin] + S-adenosyl-L-methionine = glycin-2-yl radical-[formate C-acetyltransferase] + semiquinone [flavodoxin] + 5'-deoxyadenosine + L-methionine + H(+)</text>
        <dbReference type="Rhea" id="RHEA:19225"/>
        <dbReference type="Rhea" id="RHEA-COMP:10622"/>
        <dbReference type="Rhea" id="RHEA-COMP:12190"/>
        <dbReference type="Rhea" id="RHEA-COMP:12191"/>
        <dbReference type="Rhea" id="RHEA-COMP:14480"/>
        <dbReference type="ChEBI" id="CHEBI:15378"/>
        <dbReference type="ChEBI" id="CHEBI:17319"/>
        <dbReference type="ChEBI" id="CHEBI:29947"/>
        <dbReference type="ChEBI" id="CHEBI:32722"/>
        <dbReference type="ChEBI" id="CHEBI:57618"/>
        <dbReference type="ChEBI" id="CHEBI:57844"/>
        <dbReference type="ChEBI" id="CHEBI:59789"/>
        <dbReference type="ChEBI" id="CHEBI:140311"/>
        <dbReference type="EC" id="1.97.1.4"/>
    </reaction>
</comment>
<comment type="cofactor">
    <cofactor evidence="1">
        <name>[4Fe-4S] cluster</name>
        <dbReference type="ChEBI" id="CHEBI:49883"/>
    </cofactor>
    <text evidence="1">Binds 1 [4Fe-4S] cluster. The cluster is coordinated with 3 cysteines and an exchangeable S-adenosyl-L-methionine.</text>
</comment>
<comment type="subcellular location">
    <subcellularLocation>
        <location evidence="1">Cytoplasm</location>
    </subcellularLocation>
</comment>
<comment type="similarity">
    <text evidence="4">Belongs to the organic radical-activating enzymes family.</text>
</comment>
<sequence length="251" mass="28499">MLKGHLHSVESLGTVDGPGLRYILFTQGCLLRCLYCHNPDTWKISEPSREVTVDEMVNEILPYKPYFDASGGGVTVSGGEPLLQMPFLEKLFAELKENGVHTCLDTSAGCANDTKAFQRHFEELQKHTDLILLDIKHIDNDKHIRLTGKPNTHILNFARKLSDMKQPVWIRHVLVPGYSDDKDDLIKLGEFINSLDNVEKFEILPYHQLGVHKWKTLGIAYELEDVEAPDDEAVKAAYRYVNFKGKIPVEL</sequence>
<evidence type="ECO:0000250" key="1"/>
<evidence type="ECO:0000250" key="2">
    <source>
        <dbReference type="UniProtKB" id="P0A9N4"/>
    </source>
</evidence>
<evidence type="ECO:0000255" key="3">
    <source>
        <dbReference type="PROSITE-ProRule" id="PRU01266"/>
    </source>
</evidence>
<evidence type="ECO:0000305" key="4"/>